<evidence type="ECO:0000255" key="1">
    <source>
        <dbReference type="HAMAP-Rule" id="MF_00074"/>
    </source>
</evidence>
<sequence>MLNKLSRLLDEAGISLTDHQKNQLVAYVGLLDKWNKAYNLTSVRDPNEMLVRHILDSIIVAPYLQGSRFIDVGTGPGLPGIPLAIVRPESHFTLLDSLGKRVRFLRQVQHELKLDNVTPVQSRVEAFPAEPPFDGVISRAFASLNDMVSWCHHLPAANGHFYALKGLAQKDEMENLPEGYGIAEVIELHVPQLEGERHLVVIQPKSR</sequence>
<protein>
    <recommendedName>
        <fullName evidence="1">Ribosomal RNA small subunit methyltransferase G</fullName>
        <ecNumber evidence="1">2.1.1.170</ecNumber>
    </recommendedName>
    <alternativeName>
        <fullName evidence="1">16S rRNA 7-methylguanosine methyltransferase</fullName>
        <shortName evidence="1">16S rRNA m7G methyltransferase</shortName>
    </alternativeName>
</protein>
<organism>
    <name type="scientific">Klebsiella pneumoniae (strain 342)</name>
    <dbReference type="NCBI Taxonomy" id="507522"/>
    <lineage>
        <taxon>Bacteria</taxon>
        <taxon>Pseudomonadati</taxon>
        <taxon>Pseudomonadota</taxon>
        <taxon>Gammaproteobacteria</taxon>
        <taxon>Enterobacterales</taxon>
        <taxon>Enterobacteriaceae</taxon>
        <taxon>Klebsiella/Raoultella group</taxon>
        <taxon>Klebsiella</taxon>
        <taxon>Klebsiella pneumoniae complex</taxon>
    </lineage>
</organism>
<proteinExistence type="inferred from homology"/>
<accession>B5XZL6</accession>
<reference key="1">
    <citation type="journal article" date="2008" name="PLoS Genet.">
        <title>Complete genome sequence of the N2-fixing broad host range endophyte Klebsiella pneumoniae 342 and virulence predictions verified in mice.</title>
        <authorList>
            <person name="Fouts D.E."/>
            <person name="Tyler H.L."/>
            <person name="DeBoy R.T."/>
            <person name="Daugherty S."/>
            <person name="Ren Q."/>
            <person name="Badger J.H."/>
            <person name="Durkin A.S."/>
            <person name="Huot H."/>
            <person name="Shrivastava S."/>
            <person name="Kothari S."/>
            <person name="Dodson R.J."/>
            <person name="Mohamoud Y."/>
            <person name="Khouri H."/>
            <person name="Roesch L.F.W."/>
            <person name="Krogfelt K.A."/>
            <person name="Struve C."/>
            <person name="Triplett E.W."/>
            <person name="Methe B.A."/>
        </authorList>
    </citation>
    <scope>NUCLEOTIDE SEQUENCE [LARGE SCALE GENOMIC DNA]</scope>
    <source>
        <strain>342</strain>
    </source>
</reference>
<feature type="chain" id="PRO_1000092631" description="Ribosomal RNA small subunit methyltransferase G">
    <location>
        <begin position="1"/>
        <end position="207"/>
    </location>
</feature>
<feature type="binding site" evidence="1">
    <location>
        <position position="73"/>
    </location>
    <ligand>
        <name>S-adenosyl-L-methionine</name>
        <dbReference type="ChEBI" id="CHEBI:59789"/>
    </ligand>
</feature>
<feature type="binding site" evidence="1">
    <location>
        <position position="78"/>
    </location>
    <ligand>
        <name>S-adenosyl-L-methionine</name>
        <dbReference type="ChEBI" id="CHEBI:59789"/>
    </ligand>
</feature>
<feature type="binding site" evidence="1">
    <location>
        <begin position="124"/>
        <end position="125"/>
    </location>
    <ligand>
        <name>S-adenosyl-L-methionine</name>
        <dbReference type="ChEBI" id="CHEBI:59789"/>
    </ligand>
</feature>
<feature type="binding site" evidence="1">
    <location>
        <position position="139"/>
    </location>
    <ligand>
        <name>S-adenosyl-L-methionine</name>
        <dbReference type="ChEBI" id="CHEBI:59789"/>
    </ligand>
</feature>
<dbReference type="EC" id="2.1.1.170" evidence="1"/>
<dbReference type="EMBL" id="CP000964">
    <property type="protein sequence ID" value="ACI09430.1"/>
    <property type="molecule type" value="Genomic_DNA"/>
</dbReference>
<dbReference type="SMR" id="B5XZL6"/>
<dbReference type="KEGG" id="kpe:KPK_5536"/>
<dbReference type="HOGENOM" id="CLU_065341_2_2_6"/>
<dbReference type="Proteomes" id="UP000001734">
    <property type="component" value="Chromosome"/>
</dbReference>
<dbReference type="GO" id="GO:0005829">
    <property type="term" value="C:cytosol"/>
    <property type="evidence" value="ECO:0007669"/>
    <property type="project" value="TreeGrafter"/>
</dbReference>
<dbReference type="GO" id="GO:0070043">
    <property type="term" value="F:rRNA (guanine-N7-)-methyltransferase activity"/>
    <property type="evidence" value="ECO:0007669"/>
    <property type="project" value="UniProtKB-UniRule"/>
</dbReference>
<dbReference type="CDD" id="cd02440">
    <property type="entry name" value="AdoMet_MTases"/>
    <property type="match status" value="1"/>
</dbReference>
<dbReference type="FunFam" id="3.40.50.150:FF:000032">
    <property type="entry name" value="Ribosomal RNA small subunit methyltransferase G"/>
    <property type="match status" value="1"/>
</dbReference>
<dbReference type="Gene3D" id="3.40.50.150">
    <property type="entry name" value="Vaccinia Virus protein VP39"/>
    <property type="match status" value="1"/>
</dbReference>
<dbReference type="HAMAP" id="MF_00074">
    <property type="entry name" value="16SrRNA_methyltr_G"/>
    <property type="match status" value="1"/>
</dbReference>
<dbReference type="InterPro" id="IPR003682">
    <property type="entry name" value="rRNA_ssu_MeTfrase_G"/>
</dbReference>
<dbReference type="InterPro" id="IPR029063">
    <property type="entry name" value="SAM-dependent_MTases_sf"/>
</dbReference>
<dbReference type="NCBIfam" id="TIGR00138">
    <property type="entry name" value="rsmG_gidB"/>
    <property type="match status" value="1"/>
</dbReference>
<dbReference type="PANTHER" id="PTHR31760">
    <property type="entry name" value="S-ADENOSYL-L-METHIONINE-DEPENDENT METHYLTRANSFERASES SUPERFAMILY PROTEIN"/>
    <property type="match status" value="1"/>
</dbReference>
<dbReference type="PANTHER" id="PTHR31760:SF0">
    <property type="entry name" value="S-ADENOSYL-L-METHIONINE-DEPENDENT METHYLTRANSFERASES SUPERFAMILY PROTEIN"/>
    <property type="match status" value="1"/>
</dbReference>
<dbReference type="Pfam" id="PF02527">
    <property type="entry name" value="GidB"/>
    <property type="match status" value="1"/>
</dbReference>
<dbReference type="PIRSF" id="PIRSF003078">
    <property type="entry name" value="GidB"/>
    <property type="match status" value="1"/>
</dbReference>
<dbReference type="SUPFAM" id="SSF53335">
    <property type="entry name" value="S-adenosyl-L-methionine-dependent methyltransferases"/>
    <property type="match status" value="1"/>
</dbReference>
<comment type="function">
    <text evidence="1">Specifically methylates the N7 position of guanine in position 527 of 16S rRNA.</text>
</comment>
<comment type="catalytic activity">
    <reaction evidence="1">
        <text>guanosine(527) in 16S rRNA + S-adenosyl-L-methionine = N(7)-methylguanosine(527) in 16S rRNA + S-adenosyl-L-homocysteine</text>
        <dbReference type="Rhea" id="RHEA:42732"/>
        <dbReference type="Rhea" id="RHEA-COMP:10209"/>
        <dbReference type="Rhea" id="RHEA-COMP:10210"/>
        <dbReference type="ChEBI" id="CHEBI:57856"/>
        <dbReference type="ChEBI" id="CHEBI:59789"/>
        <dbReference type="ChEBI" id="CHEBI:74269"/>
        <dbReference type="ChEBI" id="CHEBI:74480"/>
        <dbReference type="EC" id="2.1.1.170"/>
    </reaction>
</comment>
<comment type="subcellular location">
    <subcellularLocation>
        <location evidence="1">Cytoplasm</location>
    </subcellularLocation>
</comment>
<comment type="similarity">
    <text evidence="1">Belongs to the methyltransferase superfamily. RNA methyltransferase RsmG family.</text>
</comment>
<gene>
    <name evidence="1" type="primary">rsmG</name>
    <name type="ordered locus">KPK_5536</name>
</gene>
<keyword id="KW-0963">Cytoplasm</keyword>
<keyword id="KW-0489">Methyltransferase</keyword>
<keyword id="KW-0698">rRNA processing</keyword>
<keyword id="KW-0949">S-adenosyl-L-methionine</keyword>
<keyword id="KW-0808">Transferase</keyword>
<name>RSMG_KLEP3</name>